<evidence type="ECO:0000256" key="1">
    <source>
        <dbReference type="SAM" id="MobiDB-lite"/>
    </source>
</evidence>
<evidence type="ECO:0000269" key="2">
    <source>
    </source>
</evidence>
<evidence type="ECO:0000305" key="3"/>
<evidence type="ECO:0000312" key="4">
    <source>
        <dbReference type="EMBL" id="AAF58944.2"/>
    </source>
</evidence>
<protein>
    <recommendedName>
        <fullName>Protein lethal(2)k10201</fullName>
    </recommendedName>
    <alternativeName>
        <fullName>Wunen region B protein</fullName>
    </alternativeName>
</protein>
<keyword id="KW-0217">Developmental protein</keyword>
<keyword id="KW-0479">Metal-binding</keyword>
<keyword id="KW-1185">Reference proteome</keyword>
<keyword id="KW-0677">Repeat</keyword>
<keyword id="KW-0862">Zinc</keyword>
<keyword id="KW-0863">Zinc-finger</keyword>
<comment type="function">
    <text evidence="2">Vital for development.</text>
</comment>
<comment type="sequence caution" evidence="3">
    <conflict type="erroneous gene model prediction">
        <sequence resource="EMBL-CDS" id="AAC47450"/>
    </conflict>
</comment>
<feature type="chain" id="PRO_0000046927" description="Protein lethal(2)k10201">
    <location>
        <begin position="1"/>
        <end position="221"/>
    </location>
</feature>
<feature type="zinc finger region" description="C2H2-type 1">
    <location>
        <begin position="74"/>
        <end position="97"/>
    </location>
</feature>
<feature type="zinc finger region" description="C2H2-type 2">
    <location>
        <begin position="113"/>
        <end position="138"/>
    </location>
</feature>
<feature type="region of interest" description="Disordered" evidence="1">
    <location>
        <begin position="146"/>
        <end position="168"/>
    </location>
</feature>
<feature type="compositionally biased region" description="Basic residues" evidence="1">
    <location>
        <begin position="151"/>
        <end position="160"/>
    </location>
</feature>
<proteinExistence type="predicted"/>
<reference evidence="3" key="1">
    <citation type="journal article" date="1997" name="Nature">
        <title>The Drosophila protein Wunen repels migrating germ cells.</title>
        <authorList>
            <person name="Zhang N."/>
            <person name="Zhang J.P."/>
            <person name="Purcell K.J."/>
            <person name="Chen Y."/>
            <person name="Howard K."/>
        </authorList>
    </citation>
    <scope>NUCLEOTIDE SEQUENCE [GENOMIC DNA]</scope>
    <scope>FUNCTION</scope>
</reference>
<reference evidence="3" key="2">
    <citation type="journal article" date="2000" name="Science">
        <title>The genome sequence of Drosophila melanogaster.</title>
        <authorList>
            <person name="Adams M.D."/>
            <person name="Celniker S.E."/>
            <person name="Holt R.A."/>
            <person name="Evans C.A."/>
            <person name="Gocayne J.D."/>
            <person name="Amanatides P.G."/>
            <person name="Scherer S.E."/>
            <person name="Li P.W."/>
            <person name="Hoskins R.A."/>
            <person name="Galle R.F."/>
            <person name="George R.A."/>
            <person name="Lewis S.E."/>
            <person name="Richards S."/>
            <person name="Ashburner M."/>
            <person name="Henderson S.N."/>
            <person name="Sutton G.G."/>
            <person name="Wortman J.R."/>
            <person name="Yandell M.D."/>
            <person name="Zhang Q."/>
            <person name="Chen L.X."/>
            <person name="Brandon R.C."/>
            <person name="Rogers Y.-H.C."/>
            <person name="Blazej R.G."/>
            <person name="Champe M."/>
            <person name="Pfeiffer B.D."/>
            <person name="Wan K.H."/>
            <person name="Doyle C."/>
            <person name="Baxter E.G."/>
            <person name="Helt G."/>
            <person name="Nelson C.R."/>
            <person name="Miklos G.L.G."/>
            <person name="Abril J.F."/>
            <person name="Agbayani A."/>
            <person name="An H.-J."/>
            <person name="Andrews-Pfannkoch C."/>
            <person name="Baldwin D."/>
            <person name="Ballew R.M."/>
            <person name="Basu A."/>
            <person name="Baxendale J."/>
            <person name="Bayraktaroglu L."/>
            <person name="Beasley E.M."/>
            <person name="Beeson K.Y."/>
            <person name="Benos P.V."/>
            <person name="Berman B.P."/>
            <person name="Bhandari D."/>
            <person name="Bolshakov S."/>
            <person name="Borkova D."/>
            <person name="Botchan M.R."/>
            <person name="Bouck J."/>
            <person name="Brokstein P."/>
            <person name="Brottier P."/>
            <person name="Burtis K.C."/>
            <person name="Busam D.A."/>
            <person name="Butler H."/>
            <person name="Cadieu E."/>
            <person name="Center A."/>
            <person name="Chandra I."/>
            <person name="Cherry J.M."/>
            <person name="Cawley S."/>
            <person name="Dahlke C."/>
            <person name="Davenport L.B."/>
            <person name="Davies P."/>
            <person name="de Pablos B."/>
            <person name="Delcher A."/>
            <person name="Deng Z."/>
            <person name="Mays A.D."/>
            <person name="Dew I."/>
            <person name="Dietz S.M."/>
            <person name="Dodson K."/>
            <person name="Doup L.E."/>
            <person name="Downes M."/>
            <person name="Dugan-Rocha S."/>
            <person name="Dunkov B.C."/>
            <person name="Dunn P."/>
            <person name="Durbin K.J."/>
            <person name="Evangelista C.C."/>
            <person name="Ferraz C."/>
            <person name="Ferriera S."/>
            <person name="Fleischmann W."/>
            <person name="Fosler C."/>
            <person name="Gabrielian A.E."/>
            <person name="Garg N.S."/>
            <person name="Gelbart W.M."/>
            <person name="Glasser K."/>
            <person name="Glodek A."/>
            <person name="Gong F."/>
            <person name="Gorrell J.H."/>
            <person name="Gu Z."/>
            <person name="Guan P."/>
            <person name="Harris M."/>
            <person name="Harris N.L."/>
            <person name="Harvey D.A."/>
            <person name="Heiman T.J."/>
            <person name="Hernandez J.R."/>
            <person name="Houck J."/>
            <person name="Hostin D."/>
            <person name="Houston K.A."/>
            <person name="Howland T.J."/>
            <person name="Wei M.-H."/>
            <person name="Ibegwam C."/>
            <person name="Jalali M."/>
            <person name="Kalush F."/>
            <person name="Karpen G.H."/>
            <person name="Ke Z."/>
            <person name="Kennison J.A."/>
            <person name="Ketchum K.A."/>
            <person name="Kimmel B.E."/>
            <person name="Kodira C.D."/>
            <person name="Kraft C.L."/>
            <person name="Kravitz S."/>
            <person name="Kulp D."/>
            <person name="Lai Z."/>
            <person name="Lasko P."/>
            <person name="Lei Y."/>
            <person name="Levitsky A.A."/>
            <person name="Li J.H."/>
            <person name="Li Z."/>
            <person name="Liang Y."/>
            <person name="Lin X."/>
            <person name="Liu X."/>
            <person name="Mattei B."/>
            <person name="McIntosh T.C."/>
            <person name="McLeod M.P."/>
            <person name="McPherson D."/>
            <person name="Merkulov G."/>
            <person name="Milshina N.V."/>
            <person name="Mobarry C."/>
            <person name="Morris J."/>
            <person name="Moshrefi A."/>
            <person name="Mount S.M."/>
            <person name="Moy M."/>
            <person name="Murphy B."/>
            <person name="Murphy L."/>
            <person name="Muzny D.M."/>
            <person name="Nelson D.L."/>
            <person name="Nelson D.R."/>
            <person name="Nelson K.A."/>
            <person name="Nixon K."/>
            <person name="Nusskern D.R."/>
            <person name="Pacleb J.M."/>
            <person name="Palazzolo M."/>
            <person name="Pittman G.S."/>
            <person name="Pan S."/>
            <person name="Pollard J."/>
            <person name="Puri V."/>
            <person name="Reese M.G."/>
            <person name="Reinert K."/>
            <person name="Remington K."/>
            <person name="Saunders R.D.C."/>
            <person name="Scheeler F."/>
            <person name="Shen H."/>
            <person name="Shue B.C."/>
            <person name="Siden-Kiamos I."/>
            <person name="Simpson M."/>
            <person name="Skupski M.P."/>
            <person name="Smith T.J."/>
            <person name="Spier E."/>
            <person name="Spradling A.C."/>
            <person name="Stapleton M."/>
            <person name="Strong R."/>
            <person name="Sun E."/>
            <person name="Svirskas R."/>
            <person name="Tector C."/>
            <person name="Turner R."/>
            <person name="Venter E."/>
            <person name="Wang A.H."/>
            <person name="Wang X."/>
            <person name="Wang Z.-Y."/>
            <person name="Wassarman D.A."/>
            <person name="Weinstock G.M."/>
            <person name="Weissenbach J."/>
            <person name="Williams S.M."/>
            <person name="Woodage T."/>
            <person name="Worley K.C."/>
            <person name="Wu D."/>
            <person name="Yang S."/>
            <person name="Yao Q.A."/>
            <person name="Ye J."/>
            <person name="Yeh R.-F."/>
            <person name="Zaveri J.S."/>
            <person name="Zhan M."/>
            <person name="Zhang G."/>
            <person name="Zhao Q."/>
            <person name="Zheng L."/>
            <person name="Zheng X.H."/>
            <person name="Zhong F.N."/>
            <person name="Zhong W."/>
            <person name="Zhou X."/>
            <person name="Zhu S.C."/>
            <person name="Zhu X."/>
            <person name="Smith H.O."/>
            <person name="Gibbs R.A."/>
            <person name="Myers E.W."/>
            <person name="Rubin G.M."/>
            <person name="Venter J.C."/>
        </authorList>
    </citation>
    <scope>NUCLEOTIDE SEQUENCE [LARGE SCALE GENOMIC DNA]</scope>
    <source>
        <strain>Berkeley</strain>
    </source>
</reference>
<reference evidence="3" key="3">
    <citation type="journal article" date="2002" name="Genome Biol.">
        <title>Annotation of the Drosophila melanogaster euchromatic genome: a systematic review.</title>
        <authorList>
            <person name="Misra S."/>
            <person name="Crosby M.A."/>
            <person name="Mungall C.J."/>
            <person name="Matthews B.B."/>
            <person name="Campbell K.S."/>
            <person name="Hradecky P."/>
            <person name="Huang Y."/>
            <person name="Kaminker J.S."/>
            <person name="Millburn G.H."/>
            <person name="Prochnik S.E."/>
            <person name="Smith C.D."/>
            <person name="Tupy J.L."/>
            <person name="Whitfield E.J."/>
            <person name="Bayraktaroglu L."/>
            <person name="Berman B.P."/>
            <person name="Bettencourt B.R."/>
            <person name="Celniker S.E."/>
            <person name="de Grey A.D.N.J."/>
            <person name="Drysdale R.A."/>
            <person name="Harris N.L."/>
            <person name="Richter J."/>
            <person name="Russo S."/>
            <person name="Schroeder A.J."/>
            <person name="Shu S.Q."/>
            <person name="Stapleton M."/>
            <person name="Yamada C."/>
            <person name="Ashburner M."/>
            <person name="Gelbart W.M."/>
            <person name="Rubin G.M."/>
            <person name="Lewis S.E."/>
        </authorList>
    </citation>
    <scope>GENOME REANNOTATION</scope>
    <source>
        <strain>Berkeley</strain>
    </source>
</reference>
<sequence length="221" mass="24962">MDSEAAGVALLSREQIIRILSEVPAGFIKPTDPPAPSLAPFKKLGVLVDIDDILGEQDAAAARIRDNIDKEQSYSCVECRKMLPTAHLLDLHITEQHDCYFAASVERGDKPMFSCFLEECTIKFHTARQRKDHCIITHKLPANYRFDHSKNRGKQKHQGKSKPNSMEVDEVIEETKSLPYVKAFSFGHQTQRSFYTGKDQRSGKTLDDVQAMKEAINDILD</sequence>
<organism evidence="4">
    <name type="scientific">Drosophila melanogaster</name>
    <name type="common">Fruit fly</name>
    <dbReference type="NCBI Taxonomy" id="7227"/>
    <lineage>
        <taxon>Eukaryota</taxon>
        <taxon>Metazoa</taxon>
        <taxon>Ecdysozoa</taxon>
        <taxon>Arthropoda</taxon>
        <taxon>Hexapoda</taxon>
        <taxon>Insecta</taxon>
        <taxon>Pterygota</taxon>
        <taxon>Neoptera</taxon>
        <taxon>Endopterygota</taxon>
        <taxon>Diptera</taxon>
        <taxon>Brachycera</taxon>
        <taxon>Muscomorpha</taxon>
        <taxon>Ephydroidea</taxon>
        <taxon>Drosophilidae</taxon>
        <taxon>Drosophila</taxon>
        <taxon>Sophophora</taxon>
    </lineage>
</organism>
<accession>Q9V574</accession>
<accession>P91662</accession>
<gene>
    <name type="primary">l(2)k10201</name>
    <name type="ORF">CG13951</name>
</gene>
<name>L2K1_DROME</name>
<dbReference type="EMBL" id="U73823">
    <property type="protein sequence ID" value="AAC47450.1"/>
    <property type="status" value="ALT_SEQ"/>
    <property type="molecule type" value="Genomic_DNA"/>
</dbReference>
<dbReference type="EMBL" id="AE013599">
    <property type="protein sequence ID" value="AAF58944.2"/>
    <property type="molecule type" value="Genomic_DNA"/>
</dbReference>
<dbReference type="RefSeq" id="NP_788296.1">
    <property type="nucleotide sequence ID" value="NM_176116.3"/>
</dbReference>
<dbReference type="BioGRID" id="71352">
    <property type="interactions" value="8"/>
</dbReference>
<dbReference type="DIP" id="DIP-19602N"/>
<dbReference type="IntAct" id="Q9V574">
    <property type="interactions" value="8"/>
</dbReference>
<dbReference type="STRING" id="7227.FBpp0087589"/>
<dbReference type="PaxDb" id="7227-FBpp0087589"/>
<dbReference type="EnsemblMetazoa" id="FBtr0088505">
    <property type="protein sequence ID" value="FBpp0087589"/>
    <property type="gene ID" value="FBgn0016970"/>
</dbReference>
<dbReference type="GeneID" id="48373"/>
<dbReference type="KEGG" id="dme:Dmel_CG13951"/>
<dbReference type="AGR" id="FB:FBgn0016970"/>
<dbReference type="FlyBase" id="FBgn0016970">
    <property type="gene designation" value="l(2)k10201"/>
</dbReference>
<dbReference type="VEuPathDB" id="VectorBase:FBgn0016970"/>
<dbReference type="eggNOG" id="KOG4173">
    <property type="taxonomic scope" value="Eukaryota"/>
</dbReference>
<dbReference type="GeneTree" id="ENSGT00390000011381"/>
<dbReference type="HOGENOM" id="CLU_092647_1_0_1"/>
<dbReference type="InParanoid" id="Q9V574"/>
<dbReference type="OMA" id="YRFDQGK"/>
<dbReference type="OrthoDB" id="18440at2759"/>
<dbReference type="PhylomeDB" id="Q9V574"/>
<dbReference type="BioGRID-ORCS" id="48373">
    <property type="hits" value="0 hits in 1 CRISPR screen"/>
</dbReference>
<dbReference type="GenomeRNAi" id="48373"/>
<dbReference type="PRO" id="PR:Q9V574"/>
<dbReference type="Proteomes" id="UP000000803">
    <property type="component" value="Chromosome 2R"/>
</dbReference>
<dbReference type="Bgee" id="FBgn0016970">
    <property type="expression patterns" value="Expressed in mid-late elongation-stage spermatid (Drosophila) in testis and 52 other cell types or tissues"/>
</dbReference>
<dbReference type="ExpressionAtlas" id="Q9V574">
    <property type="expression patterns" value="baseline and differential"/>
</dbReference>
<dbReference type="GO" id="GO:0008270">
    <property type="term" value="F:zinc ion binding"/>
    <property type="evidence" value="ECO:0007669"/>
    <property type="project" value="UniProtKB-KW"/>
</dbReference>
<dbReference type="Gene3D" id="3.30.160.60">
    <property type="entry name" value="Classic Zinc Finger"/>
    <property type="match status" value="1"/>
</dbReference>
<dbReference type="InterPro" id="IPR039258">
    <property type="entry name" value="ZNF511"/>
</dbReference>
<dbReference type="InterPro" id="IPR013087">
    <property type="entry name" value="Znf_C2H2_type"/>
</dbReference>
<dbReference type="PANTHER" id="PTHR21354">
    <property type="entry name" value="ZINC FINGER PROTEIN 511"/>
    <property type="match status" value="1"/>
</dbReference>
<dbReference type="PANTHER" id="PTHR21354:SF0">
    <property type="entry name" value="ZINC FINGER PROTEIN 511"/>
    <property type="match status" value="1"/>
</dbReference>
<dbReference type="SMART" id="SM00355">
    <property type="entry name" value="ZnF_C2H2"/>
    <property type="match status" value="2"/>
</dbReference>
<dbReference type="PROSITE" id="PS00028">
    <property type="entry name" value="ZINC_FINGER_C2H2_1"/>
    <property type="match status" value="2"/>
</dbReference>